<comment type="catalytic activity">
    <reaction evidence="1">
        <text>tRNA(Lys) + L-lysine + ATP = L-lysyl-tRNA(Lys) + AMP + diphosphate</text>
        <dbReference type="Rhea" id="RHEA:20792"/>
        <dbReference type="Rhea" id="RHEA-COMP:9696"/>
        <dbReference type="Rhea" id="RHEA-COMP:9697"/>
        <dbReference type="ChEBI" id="CHEBI:30616"/>
        <dbReference type="ChEBI" id="CHEBI:32551"/>
        <dbReference type="ChEBI" id="CHEBI:33019"/>
        <dbReference type="ChEBI" id="CHEBI:78442"/>
        <dbReference type="ChEBI" id="CHEBI:78529"/>
        <dbReference type="ChEBI" id="CHEBI:456215"/>
        <dbReference type="EC" id="6.1.1.6"/>
    </reaction>
</comment>
<comment type="cofactor">
    <cofactor evidence="1">
        <name>Mg(2+)</name>
        <dbReference type="ChEBI" id="CHEBI:18420"/>
    </cofactor>
    <text evidence="1">Binds 3 Mg(2+) ions per subunit.</text>
</comment>
<comment type="subunit">
    <text evidence="1">Homodimer.</text>
</comment>
<comment type="subcellular location">
    <subcellularLocation>
        <location evidence="1">Cytoplasm</location>
    </subcellularLocation>
</comment>
<comment type="similarity">
    <text evidence="1">Belongs to the class-II aminoacyl-tRNA synthetase family.</text>
</comment>
<reference key="1">
    <citation type="journal article" date="2008" name="J. Bacteriol.">
        <title>The complete genome sequence of Actinobacillus pleuropneumoniae L20 (serotype 5b).</title>
        <authorList>
            <person name="Foote S.J."/>
            <person name="Bosse J.T."/>
            <person name="Bouevitch A.B."/>
            <person name="Langford P.R."/>
            <person name="Young N.M."/>
            <person name="Nash J.H.E."/>
        </authorList>
    </citation>
    <scope>NUCLEOTIDE SEQUENCE [LARGE SCALE GENOMIC DNA]</scope>
    <source>
        <strain>L20</strain>
    </source>
</reference>
<protein>
    <recommendedName>
        <fullName evidence="1">Lysine--tRNA ligase</fullName>
        <ecNumber evidence="1">6.1.1.6</ecNumber>
    </recommendedName>
    <alternativeName>
        <fullName evidence="1">Lysyl-tRNA synthetase</fullName>
        <shortName evidence="1">LysRS</shortName>
    </alternativeName>
</protein>
<dbReference type="EC" id="6.1.1.6" evidence="1"/>
<dbReference type="EMBL" id="CP000569">
    <property type="protein sequence ID" value="ABN73905.1"/>
    <property type="molecule type" value="Genomic_DNA"/>
</dbReference>
<dbReference type="RefSeq" id="WP_005601076.1">
    <property type="nucleotide sequence ID" value="NC_009053.1"/>
</dbReference>
<dbReference type="SMR" id="A3N0G9"/>
<dbReference type="STRING" id="416269.APL_0809"/>
<dbReference type="EnsemblBacteria" id="ABN73905">
    <property type="protein sequence ID" value="ABN73905"/>
    <property type="gene ID" value="APL_0809"/>
</dbReference>
<dbReference type="KEGG" id="apl:APL_0809"/>
<dbReference type="eggNOG" id="COG1190">
    <property type="taxonomic scope" value="Bacteria"/>
</dbReference>
<dbReference type="HOGENOM" id="CLU_008255_6_0_6"/>
<dbReference type="Proteomes" id="UP000001432">
    <property type="component" value="Chromosome"/>
</dbReference>
<dbReference type="GO" id="GO:0005829">
    <property type="term" value="C:cytosol"/>
    <property type="evidence" value="ECO:0007669"/>
    <property type="project" value="TreeGrafter"/>
</dbReference>
<dbReference type="GO" id="GO:0005524">
    <property type="term" value="F:ATP binding"/>
    <property type="evidence" value="ECO:0007669"/>
    <property type="project" value="UniProtKB-UniRule"/>
</dbReference>
<dbReference type="GO" id="GO:0004824">
    <property type="term" value="F:lysine-tRNA ligase activity"/>
    <property type="evidence" value="ECO:0007669"/>
    <property type="project" value="UniProtKB-UniRule"/>
</dbReference>
<dbReference type="GO" id="GO:0000287">
    <property type="term" value="F:magnesium ion binding"/>
    <property type="evidence" value="ECO:0007669"/>
    <property type="project" value="UniProtKB-UniRule"/>
</dbReference>
<dbReference type="GO" id="GO:0000049">
    <property type="term" value="F:tRNA binding"/>
    <property type="evidence" value="ECO:0007669"/>
    <property type="project" value="TreeGrafter"/>
</dbReference>
<dbReference type="GO" id="GO:0006430">
    <property type="term" value="P:lysyl-tRNA aminoacylation"/>
    <property type="evidence" value="ECO:0007669"/>
    <property type="project" value="UniProtKB-UniRule"/>
</dbReference>
<dbReference type="CDD" id="cd00775">
    <property type="entry name" value="LysRS_core"/>
    <property type="match status" value="1"/>
</dbReference>
<dbReference type="CDD" id="cd04322">
    <property type="entry name" value="LysRS_N"/>
    <property type="match status" value="1"/>
</dbReference>
<dbReference type="FunFam" id="2.40.50.140:FF:000024">
    <property type="entry name" value="Lysine--tRNA ligase"/>
    <property type="match status" value="1"/>
</dbReference>
<dbReference type="FunFam" id="3.30.930.10:FF:000001">
    <property type="entry name" value="Lysine--tRNA ligase"/>
    <property type="match status" value="1"/>
</dbReference>
<dbReference type="Gene3D" id="3.30.930.10">
    <property type="entry name" value="Bira Bifunctional Protein, Domain 2"/>
    <property type="match status" value="1"/>
</dbReference>
<dbReference type="Gene3D" id="2.40.50.140">
    <property type="entry name" value="Nucleic acid-binding proteins"/>
    <property type="match status" value="1"/>
</dbReference>
<dbReference type="HAMAP" id="MF_00252">
    <property type="entry name" value="Lys_tRNA_synth_class2"/>
    <property type="match status" value="1"/>
</dbReference>
<dbReference type="InterPro" id="IPR004364">
    <property type="entry name" value="Aa-tRNA-synt_II"/>
</dbReference>
<dbReference type="InterPro" id="IPR006195">
    <property type="entry name" value="aa-tRNA-synth_II"/>
</dbReference>
<dbReference type="InterPro" id="IPR045864">
    <property type="entry name" value="aa-tRNA-synth_II/BPL/LPL"/>
</dbReference>
<dbReference type="InterPro" id="IPR002313">
    <property type="entry name" value="Lys-tRNA-ligase_II"/>
</dbReference>
<dbReference type="InterPro" id="IPR034762">
    <property type="entry name" value="Lys-tRNA-ligase_II_bac/euk"/>
</dbReference>
<dbReference type="InterPro" id="IPR044136">
    <property type="entry name" value="Lys-tRNA-ligase_II_N"/>
</dbReference>
<dbReference type="InterPro" id="IPR018149">
    <property type="entry name" value="Lys-tRNA-synth_II_C"/>
</dbReference>
<dbReference type="InterPro" id="IPR012340">
    <property type="entry name" value="NA-bd_OB-fold"/>
</dbReference>
<dbReference type="InterPro" id="IPR004365">
    <property type="entry name" value="NA-bd_OB_tRNA"/>
</dbReference>
<dbReference type="NCBIfam" id="TIGR00499">
    <property type="entry name" value="lysS_bact"/>
    <property type="match status" value="1"/>
</dbReference>
<dbReference type="NCBIfam" id="NF001756">
    <property type="entry name" value="PRK00484.1"/>
    <property type="match status" value="1"/>
</dbReference>
<dbReference type="PANTHER" id="PTHR42918:SF15">
    <property type="entry name" value="LYSINE--TRNA LIGASE, CHLOROPLASTIC_MITOCHONDRIAL"/>
    <property type="match status" value="1"/>
</dbReference>
<dbReference type="PANTHER" id="PTHR42918">
    <property type="entry name" value="LYSYL-TRNA SYNTHETASE"/>
    <property type="match status" value="1"/>
</dbReference>
<dbReference type="Pfam" id="PF00152">
    <property type="entry name" value="tRNA-synt_2"/>
    <property type="match status" value="1"/>
</dbReference>
<dbReference type="Pfam" id="PF01336">
    <property type="entry name" value="tRNA_anti-codon"/>
    <property type="match status" value="1"/>
</dbReference>
<dbReference type="PIRSF" id="PIRSF039101">
    <property type="entry name" value="LysRS2"/>
    <property type="match status" value="1"/>
</dbReference>
<dbReference type="PRINTS" id="PR00982">
    <property type="entry name" value="TRNASYNTHLYS"/>
</dbReference>
<dbReference type="SUPFAM" id="SSF55681">
    <property type="entry name" value="Class II aaRS and biotin synthetases"/>
    <property type="match status" value="1"/>
</dbReference>
<dbReference type="SUPFAM" id="SSF50249">
    <property type="entry name" value="Nucleic acid-binding proteins"/>
    <property type="match status" value="1"/>
</dbReference>
<dbReference type="PROSITE" id="PS50862">
    <property type="entry name" value="AA_TRNA_LIGASE_II"/>
    <property type="match status" value="1"/>
</dbReference>
<evidence type="ECO:0000255" key="1">
    <source>
        <dbReference type="HAMAP-Rule" id="MF_00252"/>
    </source>
</evidence>
<accession>A3N0G9</accession>
<feature type="chain" id="PRO_1000078492" description="Lysine--tRNA ligase">
    <location>
        <begin position="1"/>
        <end position="500"/>
    </location>
</feature>
<feature type="binding site" evidence="1">
    <location>
        <position position="411"/>
    </location>
    <ligand>
        <name>Mg(2+)</name>
        <dbReference type="ChEBI" id="CHEBI:18420"/>
        <label>1</label>
    </ligand>
</feature>
<feature type="binding site" evidence="1">
    <location>
        <position position="418"/>
    </location>
    <ligand>
        <name>Mg(2+)</name>
        <dbReference type="ChEBI" id="CHEBI:18420"/>
        <label>1</label>
    </ligand>
</feature>
<feature type="binding site" evidence="1">
    <location>
        <position position="418"/>
    </location>
    <ligand>
        <name>Mg(2+)</name>
        <dbReference type="ChEBI" id="CHEBI:18420"/>
        <label>2</label>
    </ligand>
</feature>
<name>SYK_ACTP2</name>
<gene>
    <name evidence="1" type="primary">lysS</name>
    <name type="ordered locus">APL_0809</name>
</gene>
<sequence>MSEVEHQELDLNGEMLARREKLAKLREQGNPFPNTFRRDAYAEKLHAQYDEVEGEALKEQDIQVKVAGRIMLKRVMGKASFFTIQDVSGQIQLYVARDNLAEGVYADKVSMWDLGDIVGVAGTLFKTKTGELTVRCSEVELLTKSLRPLPNKVQGLTDQETRYRQRYLDLISNEESRRTFMIRSKVVSGIRQFFLEKDFIEVETPMLQVIPGGAAAKPFITHHNALDVDMYLRIAPELYLKRLVVGGFERVFELNRNFRNEGVSVRHNPEFTMIEYYQAYADYHDLMDNTEELLRKLAIDILGTTTVPYGEYVFDFGKPFERITMHDAIVKYGNGITREDLDSFEKSVEIAKGLGIEIQKSWGLGSVVNAIFEEVAEHQLIQPTFLMAHPAEISPLARRNDENPEVTDRFELFIGGREIGNGFSELNDAEDQAERFDAQVAAKDAGDDEAMFKDEDFVVALEHGLPPTAGEGLGIDRLAMIFANAPSIRDVILFPAMRQK</sequence>
<organism>
    <name type="scientific">Actinobacillus pleuropneumoniae serotype 5b (strain L20)</name>
    <dbReference type="NCBI Taxonomy" id="416269"/>
    <lineage>
        <taxon>Bacteria</taxon>
        <taxon>Pseudomonadati</taxon>
        <taxon>Pseudomonadota</taxon>
        <taxon>Gammaproteobacteria</taxon>
        <taxon>Pasteurellales</taxon>
        <taxon>Pasteurellaceae</taxon>
        <taxon>Actinobacillus</taxon>
    </lineage>
</organism>
<keyword id="KW-0030">Aminoacyl-tRNA synthetase</keyword>
<keyword id="KW-0067">ATP-binding</keyword>
<keyword id="KW-0963">Cytoplasm</keyword>
<keyword id="KW-0436">Ligase</keyword>
<keyword id="KW-0460">Magnesium</keyword>
<keyword id="KW-0479">Metal-binding</keyword>
<keyword id="KW-0547">Nucleotide-binding</keyword>
<keyword id="KW-0648">Protein biosynthesis</keyword>
<keyword id="KW-1185">Reference proteome</keyword>
<proteinExistence type="inferred from homology"/>